<reference key="1">
    <citation type="journal article" date="1996" name="EMBO J.">
        <title>The xanthopsins: a new family of eubacterial blue-light photoreceptors.</title>
        <authorList>
            <person name="Kort R."/>
            <person name="Hoff W.D."/>
            <person name="van West M."/>
            <person name="Kroon A.R."/>
            <person name="Hoffer S.M."/>
            <person name="Vlieg K.H."/>
            <person name="Crielaard W."/>
            <person name="van Beeumen J.J."/>
            <person name="Hellingwerf K.J."/>
        </authorList>
    </citation>
    <scope>NUCLEOTIDE SEQUENCE [GENOMIC DNA]</scope>
    <source>
        <strain>ATCC 17027</strain>
    </source>
</reference>
<reference key="2">
    <citation type="journal article" date="1998" name="Biochim. Biophys. Acta">
        <title>Sequence, chromophore extraction and 3-D model of the photoactive yellow protein from Rhodobacter sphaeroides.</title>
        <authorList>
            <person name="Kort R."/>
            <person name="Phillips-Jones M.K."/>
            <person name="Van Aalten D.M.F."/>
            <person name="Haker A."/>
            <person name="Hoffer S.M."/>
            <person name="Hellingwerf K.J."/>
            <person name="Crielaard W."/>
        </authorList>
    </citation>
    <scope>NUCLEOTIDE SEQUENCE [GENOMIC DNA]</scope>
    <scope>CHROMOPHORE</scope>
    <source>
        <strain>ATCC 17023 / DSM 158 / JCM 6121 / CCUG 31486 / LMG 2827 / NBRC 12203 / NCIMB 8253 / ATH 2.4.1.</strain>
    </source>
</reference>
<reference key="3">
    <citation type="journal article" date="2000" name="FEBS Lett.">
        <title>Isolation, reconstitution and functional characterisation of the Rhodobacter sphaeroides photoactive yellow protein.</title>
        <authorList>
            <person name="Haker A."/>
            <person name="Hendriks J."/>
            <person name="Gensch T."/>
            <person name="Hellingwerf K.J."/>
            <person name="Crielaard W."/>
        </authorList>
    </citation>
    <scope>CHARACTERIZATION</scope>
    <source>
        <strain>RK1</strain>
    </source>
</reference>
<comment type="function">
    <text>This photoactive protein is a photoreceptor with kinetics similar to that of rhodopsin.</text>
</comment>
<comment type="PTM">
    <text>The 4-hydroxycinnamic acid (p-coumaric acid) chromophore is covalently bound via a thioester linkage.</text>
</comment>
<comment type="similarity">
    <text evidence="1">Belongs to the photoactive yellow protein family.</text>
</comment>
<comment type="caution">
    <text evidence="1">Although this was cloned from strain NCIB 8253 in 1998 it was not detected as part of the complete proteome when it was sequenced in 2005.</text>
</comment>
<dbReference type="EMBL" id="X98889">
    <property type="protein sequence ID" value="CAA67394.1"/>
    <property type="molecule type" value="Genomic_DNA"/>
</dbReference>
<dbReference type="EMBL" id="AJ002398">
    <property type="protein sequence ID" value="CAA05377.1"/>
    <property type="molecule type" value="Genomic_DNA"/>
</dbReference>
<dbReference type="SMR" id="Q53226"/>
<dbReference type="GO" id="GO:0009881">
    <property type="term" value="F:photoreceptor activity"/>
    <property type="evidence" value="ECO:0007669"/>
    <property type="project" value="UniProtKB-KW"/>
</dbReference>
<dbReference type="GO" id="GO:0007602">
    <property type="term" value="P:phototransduction"/>
    <property type="evidence" value="ECO:0007669"/>
    <property type="project" value="InterPro"/>
</dbReference>
<dbReference type="GO" id="GO:0006355">
    <property type="term" value="P:regulation of DNA-templated transcription"/>
    <property type="evidence" value="ECO:0007669"/>
    <property type="project" value="InterPro"/>
</dbReference>
<dbReference type="CDD" id="cd00130">
    <property type="entry name" value="PAS"/>
    <property type="match status" value="1"/>
</dbReference>
<dbReference type="Gene3D" id="3.30.450.20">
    <property type="entry name" value="PAS domain"/>
    <property type="match status" value="1"/>
</dbReference>
<dbReference type="InterPro" id="IPR000014">
    <property type="entry name" value="PAS"/>
</dbReference>
<dbReference type="InterPro" id="IPR035965">
    <property type="entry name" value="PAS-like_dom_sf"/>
</dbReference>
<dbReference type="InterPro" id="IPR013767">
    <property type="entry name" value="PAS_fold"/>
</dbReference>
<dbReference type="InterPro" id="IPR012130">
    <property type="entry name" value="PYP"/>
</dbReference>
<dbReference type="NCBIfam" id="TIGR02373">
    <property type="entry name" value="photo_yellow"/>
    <property type="match status" value="1"/>
</dbReference>
<dbReference type="Pfam" id="PF00989">
    <property type="entry name" value="PAS"/>
    <property type="match status" value="1"/>
</dbReference>
<dbReference type="PIRSF" id="PIRSF000087">
    <property type="entry name" value="PYP"/>
    <property type="match status" value="1"/>
</dbReference>
<dbReference type="SUPFAM" id="SSF55785">
    <property type="entry name" value="PYP-like sensor domain (PAS domain)"/>
    <property type="match status" value="1"/>
</dbReference>
<feature type="chain" id="PRO_0000144917" description="Photoactive yellow protein">
    <location>
        <begin position="1"/>
        <end position="124"/>
    </location>
</feature>
<feature type="domain" description="PAS">
    <location>
        <begin position="22"/>
        <end position="85"/>
    </location>
</feature>
<feature type="modified residue" description="S-(4-hydroxycinnamyl)cysteine">
    <location>
        <position position="68"/>
    </location>
</feature>
<organism>
    <name type="scientific">Cereibacter sphaeroides (strain ATCC 17023 / DSM 158 / JCM 6121 / CCUG 31486 / LMG 2827 / NBRC 12203 / NCIMB 8253 / ATH 2.4.1.)</name>
    <name type="common">Rhodobacter sphaeroides</name>
    <dbReference type="NCBI Taxonomy" id="272943"/>
    <lineage>
        <taxon>Bacteria</taxon>
        <taxon>Pseudomonadati</taxon>
        <taxon>Pseudomonadota</taxon>
        <taxon>Alphaproteobacteria</taxon>
        <taxon>Rhodobacterales</taxon>
        <taxon>Paracoccaceae</taxon>
        <taxon>Cereibacter</taxon>
    </lineage>
</organism>
<name>PYP_CERS4</name>
<gene>
    <name type="primary">pyp</name>
</gene>
<evidence type="ECO:0000305" key="1"/>
<proteinExistence type="evidence at protein level"/>
<protein>
    <recommendedName>
        <fullName>Photoactive yellow protein</fullName>
        <shortName>PYP</shortName>
    </recommendedName>
</protein>
<accession>Q53226</accession>
<keyword id="KW-0157">Chromophore</keyword>
<keyword id="KW-0600">Photoreceptor protein</keyword>
<keyword id="KW-0675">Receptor</keyword>
<keyword id="KW-0716">Sensory transduction</keyword>
<sequence>MEIIPFGSADLDNILAREPQRAEYLPFGAVLLDRTGTILKYNRAEGGIANRNPADVIGKNFFNEIAPCAKGKRFHGEFLRFHQTGQVNVMFDYKFAYKGANVGVKIHMKSQPDGQSCWLFVKRV</sequence>